<name>PURO_HALSA</name>
<keyword id="KW-0378">Hydrolase</keyword>
<keyword id="KW-0658">Purine biosynthesis</keyword>
<keyword id="KW-1185">Reference proteome</keyword>
<reference key="1">
    <citation type="journal article" date="2000" name="Proc. Natl. Acad. Sci. U.S.A.">
        <title>Genome sequence of Halobacterium species NRC-1.</title>
        <authorList>
            <person name="Ng W.V."/>
            <person name="Kennedy S.P."/>
            <person name="Mahairas G.G."/>
            <person name="Berquist B."/>
            <person name="Pan M."/>
            <person name="Shukla H.D."/>
            <person name="Lasky S.R."/>
            <person name="Baliga N.S."/>
            <person name="Thorsson V."/>
            <person name="Sbrogna J."/>
            <person name="Swartzell S."/>
            <person name="Weir D."/>
            <person name="Hall J."/>
            <person name="Dahl T.A."/>
            <person name="Welti R."/>
            <person name="Goo Y.A."/>
            <person name="Leithauser B."/>
            <person name="Keller K."/>
            <person name="Cruz R."/>
            <person name="Danson M.J."/>
            <person name="Hough D.W."/>
            <person name="Maddocks D.G."/>
            <person name="Jablonski P.E."/>
            <person name="Krebs M.P."/>
            <person name="Angevine C.M."/>
            <person name="Dale H."/>
            <person name="Isenbarger T.A."/>
            <person name="Peck R.F."/>
            <person name="Pohlschroder M."/>
            <person name="Spudich J.L."/>
            <person name="Jung K.-H."/>
            <person name="Alam M."/>
            <person name="Freitas T."/>
            <person name="Hou S."/>
            <person name="Daniels C.J."/>
            <person name="Dennis P.P."/>
            <person name="Omer A.D."/>
            <person name="Ebhardt H."/>
            <person name="Lowe T.M."/>
            <person name="Liang P."/>
            <person name="Riley M."/>
            <person name="Hood L."/>
            <person name="DasSarma S."/>
        </authorList>
    </citation>
    <scope>NUCLEOTIDE SEQUENCE [LARGE SCALE GENOMIC DNA]</scope>
    <source>
        <strain>ATCC 700922 / JCM 11081 / NRC-1</strain>
    </source>
</reference>
<comment type="function">
    <text evidence="1">Catalyzes the cyclization of 5-formylamidoimidazole-4-carboxamide ribonucleotide to IMP.</text>
</comment>
<comment type="catalytic activity">
    <reaction evidence="1">
        <text>IMP + H2O = 5-formamido-1-(5-phospho-D-ribosyl)imidazole-4-carboxamide</text>
        <dbReference type="Rhea" id="RHEA:18445"/>
        <dbReference type="ChEBI" id="CHEBI:15377"/>
        <dbReference type="ChEBI" id="CHEBI:58053"/>
        <dbReference type="ChEBI" id="CHEBI:58467"/>
        <dbReference type="EC" id="3.5.4.10"/>
    </reaction>
</comment>
<comment type="pathway">
    <text evidence="1">Purine metabolism; IMP biosynthesis via de novo pathway; IMP from 5-formamido-1-(5-phospho-D-ribosyl)imidazole-4-carboxamide: step 1/1.</text>
</comment>
<comment type="similarity">
    <text evidence="1">Belongs to the archaeal IMP cyclohydrolase family.</text>
</comment>
<sequence>MYIGRFVVVGPSVAAYRVSSRSFPNRKLIERPAGLTVVPTADAEETTNPYVSYNCVRTAGGHAVVGNGSHVDPITEKVERGYPPRDALTEALLAMDYEKDDYDTPRIAGVLAPDGTAYVGIVRADAVLVRAVEEPTLVATYEKDAPEAIGFDAATAADAAREAYSAAFEHAVCAAGVSRRGVGDGYDTAVVNDP</sequence>
<feature type="chain" id="PRO_0000145794" description="IMP cyclohydrolase">
    <location>
        <begin position="1"/>
        <end position="194"/>
    </location>
</feature>
<accession>Q9HMV4</accession>
<dbReference type="EC" id="3.5.4.10" evidence="1"/>
<dbReference type="EMBL" id="AE004437">
    <property type="protein sequence ID" value="AAG20467.1"/>
    <property type="molecule type" value="Genomic_DNA"/>
</dbReference>
<dbReference type="PIR" id="G84387">
    <property type="entry name" value="G84387"/>
</dbReference>
<dbReference type="RefSeq" id="WP_010903769.1">
    <property type="nucleotide sequence ID" value="NC_002607.1"/>
</dbReference>
<dbReference type="SMR" id="Q9HMV4"/>
<dbReference type="STRING" id="64091.VNG_2371C"/>
<dbReference type="PaxDb" id="64091-VNG_2371C"/>
<dbReference type="GeneID" id="89348396"/>
<dbReference type="KEGG" id="hal:VNG_2371C"/>
<dbReference type="PATRIC" id="fig|64091.14.peg.1835"/>
<dbReference type="HOGENOM" id="CLU_1352116_0_0_2"/>
<dbReference type="InParanoid" id="Q9HMV4"/>
<dbReference type="OrthoDB" id="92928at2157"/>
<dbReference type="PhylomeDB" id="Q9HMV4"/>
<dbReference type="UniPathway" id="UPA00074">
    <property type="reaction ID" value="UER00135"/>
</dbReference>
<dbReference type="Proteomes" id="UP000000554">
    <property type="component" value="Chromosome"/>
</dbReference>
<dbReference type="GO" id="GO:0003937">
    <property type="term" value="F:IMP cyclohydrolase activity"/>
    <property type="evidence" value="ECO:0007669"/>
    <property type="project" value="UniProtKB-UniRule"/>
</dbReference>
<dbReference type="GO" id="GO:0006189">
    <property type="term" value="P:'de novo' IMP biosynthetic process"/>
    <property type="evidence" value="ECO:0007669"/>
    <property type="project" value="UniProtKB-UniRule"/>
</dbReference>
<dbReference type="Gene3D" id="3.60.20.20">
    <property type="entry name" value="Inosine monophosphate cyclohydrolase-like"/>
    <property type="match status" value="1"/>
</dbReference>
<dbReference type="HAMAP" id="MF_00705">
    <property type="entry name" value="IMP_cyclohydrol"/>
    <property type="match status" value="1"/>
</dbReference>
<dbReference type="InterPro" id="IPR010191">
    <property type="entry name" value="IMP_cyclohydrolase"/>
</dbReference>
<dbReference type="InterPro" id="IPR020600">
    <property type="entry name" value="IMP_cyclohydrolase-like"/>
</dbReference>
<dbReference type="InterPro" id="IPR036795">
    <property type="entry name" value="IMP_cyclohydrolase-like_sf"/>
</dbReference>
<dbReference type="NCBIfam" id="NF003167">
    <property type="entry name" value="PRK04151.1"/>
    <property type="match status" value="1"/>
</dbReference>
<dbReference type="NCBIfam" id="TIGR01922">
    <property type="entry name" value="purO_arch"/>
    <property type="match status" value="1"/>
</dbReference>
<dbReference type="Pfam" id="PF07826">
    <property type="entry name" value="IMP_cyclohyd"/>
    <property type="match status" value="1"/>
</dbReference>
<dbReference type="PIRSF" id="PIRSF004866">
    <property type="entry name" value="IMP_cclhdr_arch"/>
    <property type="match status" value="1"/>
</dbReference>
<dbReference type="SUPFAM" id="SSF75569">
    <property type="entry name" value="Archaeal IMP cyclohydrolase PurO"/>
    <property type="match status" value="1"/>
</dbReference>
<evidence type="ECO:0000255" key="1">
    <source>
        <dbReference type="HAMAP-Rule" id="MF_00705"/>
    </source>
</evidence>
<proteinExistence type="inferred from homology"/>
<gene>
    <name evidence="1" type="primary">purO</name>
    <name type="ordered locus">VNG_2371C</name>
</gene>
<protein>
    <recommendedName>
        <fullName evidence="1">IMP cyclohydrolase</fullName>
        <ecNumber evidence="1">3.5.4.10</ecNumber>
    </recommendedName>
    <alternativeName>
        <fullName evidence="1">IMP synthase</fullName>
    </alternativeName>
    <alternativeName>
        <fullName evidence="1">Inosinicase</fullName>
    </alternativeName>
</protein>
<organism>
    <name type="scientific">Halobacterium salinarum (strain ATCC 700922 / JCM 11081 / NRC-1)</name>
    <name type="common">Halobacterium halobium</name>
    <dbReference type="NCBI Taxonomy" id="64091"/>
    <lineage>
        <taxon>Archaea</taxon>
        <taxon>Methanobacteriati</taxon>
        <taxon>Methanobacteriota</taxon>
        <taxon>Stenosarchaea group</taxon>
        <taxon>Halobacteria</taxon>
        <taxon>Halobacteriales</taxon>
        <taxon>Halobacteriaceae</taxon>
        <taxon>Halobacterium</taxon>
        <taxon>Halobacterium salinarum NRC-34001</taxon>
    </lineage>
</organism>